<dbReference type="EC" id="1.-.-.-" evidence="3"/>
<dbReference type="EMBL" id="PP505398">
    <property type="protein sequence ID" value="WYC13319.1"/>
    <property type="molecule type" value="Genomic_DNA"/>
</dbReference>
<dbReference type="SMR" id="P9WEI7"/>
<dbReference type="UniPathway" id="UPA00213"/>
<dbReference type="GO" id="GO:0016020">
    <property type="term" value="C:membrane"/>
    <property type="evidence" value="ECO:0007669"/>
    <property type="project" value="UniProtKB-SubCell"/>
</dbReference>
<dbReference type="GO" id="GO:0020037">
    <property type="term" value="F:heme binding"/>
    <property type="evidence" value="ECO:0007669"/>
    <property type="project" value="InterPro"/>
</dbReference>
<dbReference type="GO" id="GO:0005506">
    <property type="term" value="F:iron ion binding"/>
    <property type="evidence" value="ECO:0007669"/>
    <property type="project" value="InterPro"/>
</dbReference>
<dbReference type="GO" id="GO:0004497">
    <property type="term" value="F:monooxygenase activity"/>
    <property type="evidence" value="ECO:0007669"/>
    <property type="project" value="UniProtKB-KW"/>
</dbReference>
<dbReference type="GO" id="GO:0016705">
    <property type="term" value="F:oxidoreductase activity, acting on paired donors, with incorporation or reduction of molecular oxygen"/>
    <property type="evidence" value="ECO:0007669"/>
    <property type="project" value="InterPro"/>
</dbReference>
<dbReference type="CDD" id="cd11065">
    <property type="entry name" value="CYP64-like"/>
    <property type="match status" value="1"/>
</dbReference>
<dbReference type="Gene3D" id="1.10.630.10">
    <property type="entry name" value="Cytochrome P450"/>
    <property type="match status" value="1"/>
</dbReference>
<dbReference type="InterPro" id="IPR001128">
    <property type="entry name" value="Cyt_P450"/>
</dbReference>
<dbReference type="InterPro" id="IPR017972">
    <property type="entry name" value="Cyt_P450_CS"/>
</dbReference>
<dbReference type="InterPro" id="IPR002401">
    <property type="entry name" value="Cyt_P450_E_grp-I"/>
</dbReference>
<dbReference type="InterPro" id="IPR036396">
    <property type="entry name" value="Cyt_P450_sf"/>
</dbReference>
<dbReference type="InterPro" id="IPR050364">
    <property type="entry name" value="Cytochrome_P450_fung"/>
</dbReference>
<dbReference type="PANTHER" id="PTHR46300:SF7">
    <property type="entry name" value="P450, PUTATIVE (EUROFUNG)-RELATED"/>
    <property type="match status" value="1"/>
</dbReference>
<dbReference type="PANTHER" id="PTHR46300">
    <property type="entry name" value="P450, PUTATIVE (EUROFUNG)-RELATED-RELATED"/>
    <property type="match status" value="1"/>
</dbReference>
<dbReference type="Pfam" id="PF00067">
    <property type="entry name" value="p450"/>
    <property type="match status" value="1"/>
</dbReference>
<dbReference type="PRINTS" id="PR00463">
    <property type="entry name" value="EP450I"/>
</dbReference>
<dbReference type="PRINTS" id="PR00385">
    <property type="entry name" value="P450"/>
</dbReference>
<dbReference type="SUPFAM" id="SSF48264">
    <property type="entry name" value="Cytochrome P450"/>
    <property type="match status" value="1"/>
</dbReference>
<dbReference type="PROSITE" id="PS00086">
    <property type="entry name" value="CYTOCHROME_P450"/>
    <property type="match status" value="1"/>
</dbReference>
<proteinExistence type="evidence at protein level"/>
<feature type="chain" id="PRO_0000461433" description="Cytochrome P450 monooxygenase claR">
    <location>
        <begin position="1"/>
        <end position="537"/>
    </location>
</feature>
<feature type="transmembrane region" description="Helical" evidence="2">
    <location>
        <begin position="23"/>
        <end position="43"/>
    </location>
</feature>
<feature type="binding site" description="axial binding residue" evidence="1">
    <location>
        <position position="454"/>
    </location>
    <ligand>
        <name>heme</name>
        <dbReference type="ChEBI" id="CHEBI:30413"/>
    </ligand>
    <ligandPart>
        <name>Fe</name>
        <dbReference type="ChEBI" id="CHEBI:18248"/>
    </ligandPart>
</feature>
<organism>
    <name type="scientific">Ampulloclitocybe clavipes</name>
    <name type="common">Club foot</name>
    <name type="synonym">Clitocybe clavipes</name>
    <dbReference type="NCBI Taxonomy" id="56467"/>
    <lineage>
        <taxon>Eukaryota</taxon>
        <taxon>Fungi</taxon>
        <taxon>Dikarya</taxon>
        <taxon>Basidiomycota</taxon>
        <taxon>Agaricomycotina</taxon>
        <taxon>Agaricomycetes</taxon>
        <taxon>Agaricomycetidae</taxon>
        <taxon>Agaricales</taxon>
        <taxon>Hygrophoraceae</taxon>
        <taxon>Ampulloclitocybe</taxon>
    </lineage>
</organism>
<accession>P9WEI7</accession>
<name>CLAR_AMPCV</name>
<reference key="1">
    <citation type="journal article" date="2024" name="J. Am. Chem. Soc.">
        <title>Two cytochrome P450 enzymes form the tricyclic nested skeleton of meroterpenoids by sequential oxidative reactions.</title>
        <authorList>
            <person name="Yang E."/>
            <person name="Yao Y."/>
            <person name="Su H."/>
            <person name="Sun Z."/>
            <person name="Gao S.S."/>
            <person name="Sureram S."/>
            <person name="Kittakoop P."/>
            <person name="Fan K."/>
            <person name="Pan Y."/>
            <person name="Xu X."/>
            <person name="Sun Z.H."/>
            <person name="Ma G."/>
            <person name="Liu G."/>
        </authorList>
    </citation>
    <scope>NUCLEOTIDE SEQUENCE [GENOMIC DNA]</scope>
    <scope>FUNCTION</scope>
    <scope>CATALYTIC ACTIVITY</scope>
    <scope>PATHWAY</scope>
</reference>
<protein>
    <recommendedName>
        <fullName evidence="4">Cytochrome P450 monooxygenase claR</fullName>
        <ecNumber evidence="3">1.-.-.-</ecNumber>
    </recommendedName>
    <alternativeName>
        <fullName evidence="4">Clavilactone A biosynthesis cluster protein R</fullName>
    </alternativeName>
</protein>
<gene>
    <name evidence="4" type="primary">claR</name>
</gene>
<sequence length="537" mass="60621">MDKHLSPGFASYHAQRILATPNVVTITEVALGIITLYLLGSYIVRRNSLPPGPRGLPIVGNVRDLPTERPWLFWAKHKDIYGPISSITVMGQSFIIVNELQIAIDLLDKKSAIYSDRPRLEFAGEMIGWNRQMILSQYGERFRTMRKFVKEFIGTKAAVVQYRPLQEIETRYFLARVLATPEHLADHLRLTAGAIFLRMSHGYAIDTEKPDALVNLVETAAKEFYIATSPGAWLVDQFPALQKLPNWFPGTHFKKVAAEFFEHNMEQADRPHEFVKRRMNAGTALPSFTSRMLERGLDEKDDEVVRWAANSLYGGGTDTVVASLSAFFLTMVLYPEVQKKAQKEIDTVIGTDRLPTLDDRSRLPYIEAVLKEVLRWHPIGPMGIPHRVTEDDVYNGYLIPKGAIVLPNLWMFAHDPSQYHNADEFKPERYLETDGNVPELDPHALAFGFGRRACPGQELADTNMFLTIAMSLAVFNISKAVDEKGREIEPVNEFSSGTVSHPKPYKCKVTPRSASAEELIRLVGDDHMNRPTDANDL</sequence>
<keyword id="KW-0349">Heme</keyword>
<keyword id="KW-0408">Iron</keyword>
<keyword id="KW-0472">Membrane</keyword>
<keyword id="KW-0479">Metal-binding</keyword>
<keyword id="KW-0503">Monooxygenase</keyword>
<keyword id="KW-0560">Oxidoreductase</keyword>
<keyword id="KW-0812">Transmembrane</keyword>
<keyword id="KW-1133">Transmembrane helix</keyword>
<evidence type="ECO:0000250" key="1">
    <source>
        <dbReference type="UniProtKB" id="P04798"/>
    </source>
</evidence>
<evidence type="ECO:0000255" key="2"/>
<evidence type="ECO:0000269" key="3">
    <source>
    </source>
</evidence>
<evidence type="ECO:0000303" key="4">
    <source>
    </source>
</evidence>
<evidence type="ECO:0000305" key="5"/>
<comment type="function">
    <text evidence="3">Cytochrome P450 monooxygenase; part of the gene cluster that mediates the biosynthesis of clavilactone A, a meroterpenoid that features a unique benzo-fused ten-membered carbocyclic ring unit with an alpha,beta-epoxy-gamma-lactone moiety, forming an intriguing 10/5/3 tricyclic nested skeleton (PubMed:38602511). ClaR, ClaS and ClaT are sufficient to produce clavilactone A (PubMed:38602511). ClaR acts as a macrocyclase to catalyze the oxidative cyclization of the isopentenyl to the nonterpenoid moieties to form the benzo-fused macrocycle, leading to wigantol (PubMed:38602511). The biosynthesis begins with the prenyltransferase claS that transfers geranyl pyrophosphate (GPP) to hydroquinone to produces geranylhydroquinone. The cytochrome P450 monooxygenase claR then catalyzes the diradical coupling reaction between the intramolecular hydroquinone and allyl moieties to form the benzo-fused ten-membered carbocyclic ring unit of wigantol. Finally the cytochrome P450 monooxygenase claT exquisitely and stereoselectively assembles the alpha,beta-epoxy-gamma-lactone moiety, producing clavilactone A via arnebinol A (PubMed:38602511).</text>
</comment>
<comment type="catalytic activity">
    <reaction evidence="3">
        <text>(2E)-geranylhydroquinone + reduced [NADPH--hemoprotein reductase] + O2 = wigandol + oxidized [NADPH--hemoprotein reductase] + 2 H2O + H(+)</text>
        <dbReference type="Rhea" id="RHEA:82847"/>
        <dbReference type="Rhea" id="RHEA-COMP:11964"/>
        <dbReference type="Rhea" id="RHEA-COMP:11965"/>
        <dbReference type="ChEBI" id="CHEBI:15377"/>
        <dbReference type="ChEBI" id="CHEBI:15378"/>
        <dbReference type="ChEBI" id="CHEBI:15379"/>
        <dbReference type="ChEBI" id="CHEBI:24233"/>
        <dbReference type="ChEBI" id="CHEBI:57618"/>
        <dbReference type="ChEBI" id="CHEBI:58210"/>
        <dbReference type="ChEBI" id="CHEBI:232537"/>
    </reaction>
    <physiologicalReaction direction="left-to-right" evidence="3">
        <dbReference type="Rhea" id="RHEA:82848"/>
    </physiologicalReaction>
</comment>
<comment type="cofactor">
    <cofactor evidence="1">
        <name>heme</name>
        <dbReference type="ChEBI" id="CHEBI:30413"/>
    </cofactor>
</comment>
<comment type="pathway">
    <text evidence="3">Secondary metabolite biosynthesis; terpenoid biosynthesis.</text>
</comment>
<comment type="subcellular location">
    <subcellularLocation>
        <location evidence="2">Membrane</location>
        <topology evidence="2">Single-pass membrane protein</topology>
    </subcellularLocation>
</comment>
<comment type="similarity">
    <text evidence="5">Belongs to the cytochrome P450 family.</text>
</comment>